<keyword id="KW-0002">3D-structure</keyword>
<keyword id="KW-0129">CBS domain</keyword>
<keyword id="KW-0170">Cobalt</keyword>
<keyword id="KW-0460">Magnesium</keyword>
<keyword id="KW-1185">Reference proteome</keyword>
<keyword id="KW-0677">Repeat</keyword>
<keyword id="KW-0813">Transport</keyword>
<accession>P0A2L3</accession>
<accession>O87575</accession>
<accession>Q9R874</accession>
<dbReference type="EMBL" id="AF085347">
    <property type="protein sequence ID" value="AAC36474.1"/>
    <property type="molecule type" value="Genomic_DNA"/>
</dbReference>
<dbReference type="EMBL" id="AE006468">
    <property type="protein sequence ID" value="AAL19618.1"/>
    <property type="molecule type" value="Genomic_DNA"/>
</dbReference>
<dbReference type="EMBL" id="AF116773">
    <property type="protein sequence ID" value="AAD09823.1"/>
    <property type="molecule type" value="Genomic_DNA"/>
</dbReference>
<dbReference type="RefSeq" id="WP_001278615.1">
    <property type="nucleotide sequence ID" value="NC_003197.2"/>
</dbReference>
<dbReference type="PDB" id="3NQR">
    <property type="method" value="X-ray"/>
    <property type="resolution" value="2.00 A"/>
    <property type="chains" value="A/B/C/D=65-191"/>
</dbReference>
<dbReference type="PDBsum" id="3NQR"/>
<dbReference type="SMR" id="P0A2L3"/>
<dbReference type="STRING" id="99287.STM0667"/>
<dbReference type="TCDB" id="1.C.126.1.2">
    <property type="family name" value="the hlyc haemolysin (hlyc) family"/>
</dbReference>
<dbReference type="PaxDb" id="99287-STM0667"/>
<dbReference type="DNASU" id="1252187"/>
<dbReference type="KEGG" id="stm:STM0667"/>
<dbReference type="PATRIC" id="fig|99287.12.peg.703"/>
<dbReference type="HOGENOM" id="CLU_015237_3_0_6"/>
<dbReference type="OMA" id="QMISIKA"/>
<dbReference type="PhylomeDB" id="P0A2L3"/>
<dbReference type="BioCyc" id="SENT99287:STM0667-MONOMER"/>
<dbReference type="EvolutionaryTrace" id="P0A2L3"/>
<dbReference type="Proteomes" id="UP000001014">
    <property type="component" value="Chromosome"/>
</dbReference>
<dbReference type="GO" id="GO:0005886">
    <property type="term" value="C:plasma membrane"/>
    <property type="evidence" value="ECO:0000318"/>
    <property type="project" value="GO_Central"/>
</dbReference>
<dbReference type="GO" id="GO:0050660">
    <property type="term" value="F:flavin adenine dinucleotide binding"/>
    <property type="evidence" value="ECO:0007669"/>
    <property type="project" value="InterPro"/>
</dbReference>
<dbReference type="CDD" id="cd04590">
    <property type="entry name" value="CBS_pair_CorC_HlyC_assoc"/>
    <property type="match status" value="1"/>
</dbReference>
<dbReference type="FunFam" id="3.30.465.10:FF:000003">
    <property type="entry name" value="Magnesium and cobalt efflux protein corC"/>
    <property type="match status" value="1"/>
</dbReference>
<dbReference type="FunFam" id="3.10.580.10:FF:000002">
    <property type="entry name" value="Magnesium/cobalt efflux protein CorC"/>
    <property type="match status" value="1"/>
</dbReference>
<dbReference type="Gene3D" id="3.30.465.10">
    <property type="match status" value="1"/>
</dbReference>
<dbReference type="Gene3D" id="3.10.580.10">
    <property type="entry name" value="CBS-domain"/>
    <property type="match status" value="1"/>
</dbReference>
<dbReference type="InterPro" id="IPR000644">
    <property type="entry name" value="CBS_dom"/>
</dbReference>
<dbReference type="InterPro" id="IPR046342">
    <property type="entry name" value="CBS_dom_sf"/>
</dbReference>
<dbReference type="InterPro" id="IPR054115">
    <property type="entry name" value="CorC_N"/>
</dbReference>
<dbReference type="InterPro" id="IPR036318">
    <property type="entry name" value="FAD-bd_PCMH-like_sf"/>
</dbReference>
<dbReference type="InterPro" id="IPR016169">
    <property type="entry name" value="FAD-bd_PCMH_sub2"/>
</dbReference>
<dbReference type="InterPro" id="IPR044751">
    <property type="entry name" value="Ion_transp-like_CBS"/>
</dbReference>
<dbReference type="InterPro" id="IPR005170">
    <property type="entry name" value="Transptr-assoc_dom"/>
</dbReference>
<dbReference type="NCBIfam" id="NF011675">
    <property type="entry name" value="PRK15094.1"/>
    <property type="match status" value="1"/>
</dbReference>
<dbReference type="PANTHER" id="PTHR22777">
    <property type="entry name" value="HEMOLYSIN-RELATED"/>
    <property type="match status" value="1"/>
</dbReference>
<dbReference type="PANTHER" id="PTHR22777:SF27">
    <property type="entry name" value="MAGNESIUM AND COBALT EFFLUX PROTEIN CORC"/>
    <property type="match status" value="1"/>
</dbReference>
<dbReference type="Pfam" id="PF00571">
    <property type="entry name" value="CBS"/>
    <property type="match status" value="2"/>
</dbReference>
<dbReference type="Pfam" id="PF03471">
    <property type="entry name" value="CorC_HlyC"/>
    <property type="match status" value="1"/>
</dbReference>
<dbReference type="Pfam" id="PF21917">
    <property type="entry name" value="NMB0537_N"/>
    <property type="match status" value="1"/>
</dbReference>
<dbReference type="SMART" id="SM00116">
    <property type="entry name" value="CBS"/>
    <property type="match status" value="2"/>
</dbReference>
<dbReference type="SMART" id="SM01091">
    <property type="entry name" value="CorC_HlyC"/>
    <property type="match status" value="1"/>
</dbReference>
<dbReference type="SUPFAM" id="SSF54631">
    <property type="entry name" value="CBS-domain pair"/>
    <property type="match status" value="1"/>
</dbReference>
<dbReference type="SUPFAM" id="SSF56176">
    <property type="entry name" value="FAD-binding/transporter-associated domain-like"/>
    <property type="match status" value="1"/>
</dbReference>
<dbReference type="PROSITE" id="PS51371">
    <property type="entry name" value="CBS"/>
    <property type="match status" value="2"/>
</dbReference>
<comment type="function">
    <text evidence="1 3">Plays a role in the transport of magnesium and cobalt ions.</text>
</comment>
<comment type="similarity">
    <text evidence="4">Belongs to the UPF0053 family.</text>
</comment>
<sequence>MSDDNSHSSDTVNSKKGFFSLLLSQLFHGEPKNRDELLALIRDSGQNELIDEDTRDMLEGVMDIADQRVRDIMIPRSQMITLKRNQTLDECLDVIIESAHSRFPVISEDKDHIEGILMAKDLLPFMRSDAEAFSMDKVLRTAVVVPESKRVDRMLKEFRSQRYHMAIVIDEFGGVSGLVTIEDILELIVGEIEDEYDEEDDIDFRQLSRHTWTIRALASIEDFNDAFGTHFSDEEVDTIGGLVMQAFGHLPARGETIDIDGYQFKVAMADSRRIIQVHVRIPDDSPQPKLDE</sequence>
<reference key="1">
    <citation type="submission" date="1998-09" db="EMBL/GenBank/DDBJ databases">
        <title>Magnesium transport in Salmonella typhimurium: sequence and characterization of the corB, corC, and corD genes.</title>
        <authorList>
            <person name="Smith R.L."/>
            <person name="Ahuga D."/>
            <person name="Thacker L.K."/>
            <person name="Maguire M.E."/>
        </authorList>
    </citation>
    <scope>NUCLEOTIDE SEQUENCE [GENOMIC DNA]</scope>
    <source>
        <strain>LT2</strain>
    </source>
</reference>
<reference key="2">
    <citation type="journal article" date="2001" name="Nature">
        <title>Complete genome sequence of Salmonella enterica serovar Typhimurium LT2.</title>
        <authorList>
            <person name="McClelland M."/>
            <person name="Sanderson K.E."/>
            <person name="Spieth J."/>
            <person name="Clifton S.W."/>
            <person name="Latreille P."/>
            <person name="Courtney L."/>
            <person name="Porwollik S."/>
            <person name="Ali J."/>
            <person name="Dante M."/>
            <person name="Du F."/>
            <person name="Hou S."/>
            <person name="Layman D."/>
            <person name="Leonard S."/>
            <person name="Nguyen C."/>
            <person name="Scott K."/>
            <person name="Holmes A."/>
            <person name="Grewal N."/>
            <person name="Mulvaney E."/>
            <person name="Ryan E."/>
            <person name="Sun H."/>
            <person name="Florea L."/>
            <person name="Miller W."/>
            <person name="Stoneking T."/>
            <person name="Nhan M."/>
            <person name="Waterston R."/>
            <person name="Wilson R.K."/>
        </authorList>
    </citation>
    <scope>NUCLEOTIDE SEQUENCE [LARGE SCALE GENOMIC DNA]</scope>
    <source>
        <strain>LT2 / SGSC1412 / ATCC 700720</strain>
    </source>
</reference>
<reference key="3">
    <citation type="submission" date="1998-12" db="EMBL/GenBank/DDBJ databases">
        <title>Cloning and sequencing of apolipoprotein N-acyltransferase from Salmonella typhimurium.</title>
        <authorList>
            <person name="Gupta S.D."/>
            <person name="Rahman A."/>
            <person name="Wu H.C."/>
            <person name="Rick P.D."/>
        </authorList>
    </citation>
    <scope>NUCLEOTIDE SEQUENCE [GENOMIC DNA] OF 20-292</scope>
    <source>
        <strain>LEU485</strain>
    </source>
</reference>
<reference key="4">
    <citation type="journal article" date="1991" name="Mol. Microbiol.">
        <title>Magnesium transport in Salmonella typhimurium: the influence of new mutations conferring Co2+ resistance on the CorA Mg2+ transport system.</title>
        <authorList>
            <person name="Gibson M.M."/>
            <person name="Bagga D.A."/>
            <person name="Miller C.G."/>
            <person name="Maguire M.E."/>
        </authorList>
    </citation>
    <scope>FUNCTION</scope>
</reference>
<evidence type="ECO:0000250" key="1"/>
<evidence type="ECO:0000255" key="2">
    <source>
        <dbReference type="PROSITE-ProRule" id="PRU00703"/>
    </source>
</evidence>
<evidence type="ECO:0000269" key="3">
    <source>
    </source>
</evidence>
<evidence type="ECO:0000305" key="4"/>
<evidence type="ECO:0007829" key="5">
    <source>
        <dbReference type="PDB" id="3NQR"/>
    </source>
</evidence>
<protein>
    <recommendedName>
        <fullName>Magnesium and cobalt efflux protein CorC</fullName>
    </recommendedName>
</protein>
<feature type="chain" id="PRO_0000088351" description="Magnesium and cobalt efflux protein CorC">
    <location>
        <begin position="1"/>
        <end position="292"/>
    </location>
</feature>
<feature type="domain" description="CBS 1" evidence="2">
    <location>
        <begin position="73"/>
        <end position="133"/>
    </location>
</feature>
<feature type="domain" description="CBS 2" evidence="2">
    <location>
        <begin position="135"/>
        <end position="195"/>
    </location>
</feature>
<feature type="sequence conflict" description="In Ref. 1; AAC36474." evidence="4" ref="1">
    <original>L</original>
    <variation>F</variation>
    <location>
        <position position="122"/>
    </location>
</feature>
<feature type="sequence conflict" description="In Ref. 1; AAC36474." evidence="4" ref="1">
    <original>E</original>
    <variation>V</variation>
    <location>
        <position position="191"/>
    </location>
</feature>
<feature type="helix" evidence="5">
    <location>
        <begin position="69"/>
        <end position="72"/>
    </location>
</feature>
<feature type="strand" evidence="5">
    <location>
        <begin position="73"/>
        <end position="75"/>
    </location>
</feature>
<feature type="helix" evidence="5">
    <location>
        <begin position="76"/>
        <end position="78"/>
    </location>
</feature>
<feature type="helix" evidence="5">
    <location>
        <begin position="88"/>
        <end position="98"/>
    </location>
</feature>
<feature type="strand" evidence="5">
    <location>
        <begin position="101"/>
        <end position="109"/>
    </location>
</feature>
<feature type="strand" evidence="5">
    <location>
        <begin position="113"/>
        <end position="118"/>
    </location>
</feature>
<feature type="helix" evidence="5">
    <location>
        <begin position="119"/>
        <end position="126"/>
    </location>
</feature>
<feature type="helix" evidence="5">
    <location>
        <begin position="135"/>
        <end position="138"/>
    </location>
</feature>
<feature type="strand" evidence="5">
    <location>
        <begin position="144"/>
        <end position="146"/>
    </location>
</feature>
<feature type="helix" evidence="5">
    <location>
        <begin position="151"/>
        <end position="160"/>
    </location>
</feature>
<feature type="strand" evidence="5">
    <location>
        <begin position="165"/>
        <end position="169"/>
    </location>
</feature>
<feature type="strand" evidence="5">
    <location>
        <begin position="175"/>
        <end position="180"/>
    </location>
</feature>
<feature type="helix" evidence="5">
    <location>
        <begin position="181"/>
        <end position="187"/>
    </location>
</feature>
<organism>
    <name type="scientific">Salmonella typhimurium (strain LT2 / SGSC1412 / ATCC 700720)</name>
    <dbReference type="NCBI Taxonomy" id="99287"/>
    <lineage>
        <taxon>Bacteria</taxon>
        <taxon>Pseudomonadati</taxon>
        <taxon>Pseudomonadota</taxon>
        <taxon>Gammaproteobacteria</taxon>
        <taxon>Enterobacterales</taxon>
        <taxon>Enterobacteriaceae</taxon>
        <taxon>Salmonella</taxon>
    </lineage>
</organism>
<gene>
    <name type="primary">corC</name>
    <name type="ordered locus">STM0667</name>
</gene>
<proteinExistence type="evidence at protein level"/>
<name>CORC_SALTY</name>